<name>MNMC_BURVG</name>
<sequence length="653" mass="69905">MPDRLVPATLAFRDDGTLISPEYGDIYYNVAGAFAQANYVFIAGNRLPARWQGSRTFTIVETGFGTGTNFLATWAAWRDDPARCERLHFVSFEKHPFTRDDLRRALSHIVAGTTLSEQATLLADAWPPAVPGFHRIEFEGGRVVLTLALGDARELLPKLVARADAFYLDGFAPAKNADLWSADVFRALARVAADDATFATYSSAGVVKQALVEAGFAYRKMPGLAGKFAMLVGEYAPRWRMRRHEPPRALPVAVREAIVIGAGLAGCALVERLAARGWHVTLIERHAQIASEASGNPAGVFHPLMTRDDNVASRLTRSGFLHALARWRALEHAGHTFARSTRGMIHLAESADDFVRMRDAFDALGAPADHVTLLDADAARAHLNLPVAHGGLLFPHGGAVWPAGLCAAQVAAAGERVTLRTGTEVARLERDGDTWRAIGADGATIAEAPVVVLANAGDAVRLAGLRHVALQPVRGQLTLLPPGTTAPLPCPAIGDGYAVPLDDGTLLIGATFEPDDVDPEIRDAGHLENLARIRHLLPGLVGDVPDVDTLRGRVAFRWVVADRVPLIGPLADEAQAVANARALSGAKARDLPRTAGLYGAFGFGSRGLVWASLGAELIASQLEGEPLPLERELVDAVDPARFLIRALRGRKLG</sequence>
<proteinExistence type="inferred from homology"/>
<comment type="function">
    <text evidence="1">Catalyzes the last two steps in the biosynthesis of 5-methylaminomethyl-2-thiouridine (mnm(5)s(2)U) at the wobble position (U34) in tRNA. Catalyzes the FAD-dependent demodification of cmnm(5)s(2)U34 to nm(5)s(2)U34, followed by the transfer of a methyl group from S-adenosyl-L-methionine to nm(5)s(2)U34, to form mnm(5)s(2)U34.</text>
</comment>
<comment type="catalytic activity">
    <reaction evidence="1">
        <text>5-aminomethyl-2-thiouridine(34) in tRNA + S-adenosyl-L-methionine = 5-methylaminomethyl-2-thiouridine(34) in tRNA + S-adenosyl-L-homocysteine + H(+)</text>
        <dbReference type="Rhea" id="RHEA:19569"/>
        <dbReference type="Rhea" id="RHEA-COMP:10195"/>
        <dbReference type="Rhea" id="RHEA-COMP:10197"/>
        <dbReference type="ChEBI" id="CHEBI:15378"/>
        <dbReference type="ChEBI" id="CHEBI:57856"/>
        <dbReference type="ChEBI" id="CHEBI:59789"/>
        <dbReference type="ChEBI" id="CHEBI:74454"/>
        <dbReference type="ChEBI" id="CHEBI:74455"/>
        <dbReference type="EC" id="2.1.1.61"/>
    </reaction>
</comment>
<comment type="cofactor">
    <cofactor evidence="1">
        <name>FAD</name>
        <dbReference type="ChEBI" id="CHEBI:57692"/>
    </cofactor>
</comment>
<comment type="subcellular location">
    <subcellularLocation>
        <location evidence="1">Cytoplasm</location>
    </subcellularLocation>
</comment>
<comment type="similarity">
    <text evidence="1">In the N-terminal section; belongs to the methyltransferase superfamily. tRNA (mnm(5)s(2)U34)-methyltransferase family.</text>
</comment>
<comment type="similarity">
    <text evidence="1">In the C-terminal section; belongs to the DAO family.</text>
</comment>
<protein>
    <recommendedName>
        <fullName evidence="1">tRNA 5-methylaminomethyl-2-thiouridine biosynthesis bifunctional protein MnmC</fullName>
        <shortName evidence="1">tRNA mnm(5)s(2)U biosynthesis bifunctional protein</shortName>
    </recommendedName>
    <domain>
        <recommendedName>
            <fullName evidence="1">tRNA (mnm(5)s(2)U34)-methyltransferase</fullName>
            <ecNumber evidence="1">2.1.1.61</ecNumber>
        </recommendedName>
    </domain>
    <domain>
        <recommendedName>
            <fullName evidence="1">FAD-dependent cmnm(5)s(2)U34 oxidoreductase</fullName>
            <ecNumber evidence="1">1.5.-.-</ecNumber>
        </recommendedName>
    </domain>
</protein>
<dbReference type="EC" id="2.1.1.61" evidence="1"/>
<dbReference type="EC" id="1.5.-.-" evidence="1"/>
<dbReference type="EMBL" id="CP000614">
    <property type="protein sequence ID" value="ABO53098.1"/>
    <property type="molecule type" value="Genomic_DNA"/>
</dbReference>
<dbReference type="SMR" id="A4J9Z5"/>
<dbReference type="KEGG" id="bvi:Bcep1808_0075"/>
<dbReference type="eggNOG" id="COG0665">
    <property type="taxonomic scope" value="Bacteria"/>
</dbReference>
<dbReference type="eggNOG" id="COG4121">
    <property type="taxonomic scope" value="Bacteria"/>
</dbReference>
<dbReference type="HOGENOM" id="CLU_022427_1_0_4"/>
<dbReference type="Proteomes" id="UP000002287">
    <property type="component" value="Chromosome 1"/>
</dbReference>
<dbReference type="GO" id="GO:0005737">
    <property type="term" value="C:cytoplasm"/>
    <property type="evidence" value="ECO:0007669"/>
    <property type="project" value="UniProtKB-SubCell"/>
</dbReference>
<dbReference type="GO" id="GO:0050660">
    <property type="term" value="F:flavin adenine dinucleotide binding"/>
    <property type="evidence" value="ECO:0007669"/>
    <property type="project" value="UniProtKB-UniRule"/>
</dbReference>
<dbReference type="GO" id="GO:0016645">
    <property type="term" value="F:oxidoreductase activity, acting on the CH-NH group of donors"/>
    <property type="evidence" value="ECO:0007669"/>
    <property type="project" value="InterPro"/>
</dbReference>
<dbReference type="GO" id="GO:0004808">
    <property type="term" value="F:tRNA (5-methylaminomethyl-2-thiouridylate)(34)-methyltransferase activity"/>
    <property type="evidence" value="ECO:0007669"/>
    <property type="project" value="UniProtKB-EC"/>
</dbReference>
<dbReference type="GO" id="GO:0032259">
    <property type="term" value="P:methylation"/>
    <property type="evidence" value="ECO:0007669"/>
    <property type="project" value="UniProtKB-KW"/>
</dbReference>
<dbReference type="GO" id="GO:0002097">
    <property type="term" value="P:tRNA wobble base modification"/>
    <property type="evidence" value="ECO:0007669"/>
    <property type="project" value="UniProtKB-UniRule"/>
</dbReference>
<dbReference type="Gene3D" id="3.30.9.10">
    <property type="entry name" value="D-Amino Acid Oxidase, subunit A, domain 2"/>
    <property type="match status" value="1"/>
</dbReference>
<dbReference type="Gene3D" id="3.50.50.60">
    <property type="entry name" value="FAD/NAD(P)-binding domain"/>
    <property type="match status" value="1"/>
</dbReference>
<dbReference type="Gene3D" id="3.40.50.150">
    <property type="entry name" value="Vaccinia Virus protein VP39"/>
    <property type="match status" value="1"/>
</dbReference>
<dbReference type="HAMAP" id="MF_01102">
    <property type="entry name" value="MnmC"/>
    <property type="match status" value="1"/>
</dbReference>
<dbReference type="InterPro" id="IPR006076">
    <property type="entry name" value="FAD-dep_OxRdtase"/>
</dbReference>
<dbReference type="InterPro" id="IPR036188">
    <property type="entry name" value="FAD/NAD-bd_sf"/>
</dbReference>
<dbReference type="InterPro" id="IPR008471">
    <property type="entry name" value="MnmC-like_methylTransf"/>
</dbReference>
<dbReference type="InterPro" id="IPR029063">
    <property type="entry name" value="SAM-dependent_MTases_sf"/>
</dbReference>
<dbReference type="InterPro" id="IPR023032">
    <property type="entry name" value="tRNA_MAMT_biosynth_bifunc_MnmC"/>
</dbReference>
<dbReference type="InterPro" id="IPR047785">
    <property type="entry name" value="tRNA_MNMC2"/>
</dbReference>
<dbReference type="InterPro" id="IPR017610">
    <property type="entry name" value="tRNA_S-uridine_synth_MnmC_C"/>
</dbReference>
<dbReference type="NCBIfam" id="TIGR03197">
    <property type="entry name" value="MnmC_Cterm"/>
    <property type="match status" value="1"/>
</dbReference>
<dbReference type="NCBIfam" id="NF002481">
    <property type="entry name" value="PRK01747.1-2"/>
    <property type="match status" value="1"/>
</dbReference>
<dbReference type="NCBIfam" id="NF002483">
    <property type="entry name" value="PRK01747.1-4"/>
    <property type="match status" value="1"/>
</dbReference>
<dbReference type="NCBIfam" id="NF033855">
    <property type="entry name" value="tRNA_MNMC2"/>
    <property type="match status" value="1"/>
</dbReference>
<dbReference type="PANTHER" id="PTHR13847">
    <property type="entry name" value="SARCOSINE DEHYDROGENASE-RELATED"/>
    <property type="match status" value="1"/>
</dbReference>
<dbReference type="PANTHER" id="PTHR13847:SF283">
    <property type="entry name" value="TRNA 5-METHYLAMINOMETHYL-2-THIOURIDINE BIOSYNTHESIS BIFUNCTIONAL PROTEIN MNMC"/>
    <property type="match status" value="1"/>
</dbReference>
<dbReference type="Pfam" id="PF01266">
    <property type="entry name" value="DAO"/>
    <property type="match status" value="1"/>
</dbReference>
<dbReference type="Pfam" id="PF05430">
    <property type="entry name" value="Methyltransf_30"/>
    <property type="match status" value="1"/>
</dbReference>
<dbReference type="SUPFAM" id="SSF54373">
    <property type="entry name" value="FAD-linked reductases, C-terminal domain"/>
    <property type="match status" value="1"/>
</dbReference>
<dbReference type="SUPFAM" id="SSF51905">
    <property type="entry name" value="FAD/NAD(P)-binding domain"/>
    <property type="match status" value="1"/>
</dbReference>
<feature type="chain" id="PRO_0000347965" description="tRNA 5-methylaminomethyl-2-thiouridine biosynthesis bifunctional protein MnmC">
    <location>
        <begin position="1"/>
        <end position="653"/>
    </location>
</feature>
<feature type="region of interest" description="tRNA (mnm(5)s(2)U34)-methyltransferase">
    <location>
        <begin position="1"/>
        <end position="236"/>
    </location>
</feature>
<feature type="region of interest" description="FAD-dependent cmnm(5)s(2)U34 oxidoreductase">
    <location>
        <begin position="260"/>
        <end position="653"/>
    </location>
</feature>
<evidence type="ECO:0000255" key="1">
    <source>
        <dbReference type="HAMAP-Rule" id="MF_01102"/>
    </source>
</evidence>
<reference key="1">
    <citation type="submission" date="2007-03" db="EMBL/GenBank/DDBJ databases">
        <title>Complete sequence of chromosome 1 of Burkholderia vietnamiensis G4.</title>
        <authorList>
            <consortium name="US DOE Joint Genome Institute"/>
            <person name="Copeland A."/>
            <person name="Lucas S."/>
            <person name="Lapidus A."/>
            <person name="Barry K."/>
            <person name="Detter J.C."/>
            <person name="Glavina del Rio T."/>
            <person name="Hammon N."/>
            <person name="Israni S."/>
            <person name="Dalin E."/>
            <person name="Tice H."/>
            <person name="Pitluck S."/>
            <person name="Chain P."/>
            <person name="Malfatti S."/>
            <person name="Shin M."/>
            <person name="Vergez L."/>
            <person name="Schmutz J."/>
            <person name="Larimer F."/>
            <person name="Land M."/>
            <person name="Hauser L."/>
            <person name="Kyrpides N."/>
            <person name="Tiedje J."/>
            <person name="Richardson P."/>
        </authorList>
    </citation>
    <scope>NUCLEOTIDE SEQUENCE [LARGE SCALE GENOMIC DNA]</scope>
    <source>
        <strain>G4 / LMG 22486</strain>
    </source>
</reference>
<gene>
    <name evidence="1" type="primary">mnmC</name>
    <name type="ordered locus">Bcep1808_0075</name>
</gene>
<organism>
    <name type="scientific">Burkholderia vietnamiensis (strain G4 / LMG 22486)</name>
    <name type="common">Burkholderia cepacia (strain R1808)</name>
    <dbReference type="NCBI Taxonomy" id="269482"/>
    <lineage>
        <taxon>Bacteria</taxon>
        <taxon>Pseudomonadati</taxon>
        <taxon>Pseudomonadota</taxon>
        <taxon>Betaproteobacteria</taxon>
        <taxon>Burkholderiales</taxon>
        <taxon>Burkholderiaceae</taxon>
        <taxon>Burkholderia</taxon>
        <taxon>Burkholderia cepacia complex</taxon>
    </lineage>
</organism>
<keyword id="KW-0963">Cytoplasm</keyword>
<keyword id="KW-0274">FAD</keyword>
<keyword id="KW-0285">Flavoprotein</keyword>
<keyword id="KW-0489">Methyltransferase</keyword>
<keyword id="KW-0511">Multifunctional enzyme</keyword>
<keyword id="KW-0560">Oxidoreductase</keyword>
<keyword id="KW-0949">S-adenosyl-L-methionine</keyword>
<keyword id="KW-0808">Transferase</keyword>
<keyword id="KW-0819">tRNA processing</keyword>
<accession>A4J9Z5</accession>